<proteinExistence type="inferred from homology"/>
<organism>
    <name type="scientific">Streptococcus pyogenes serotype M6 (strain ATCC BAA-946 / MGAS10394)</name>
    <dbReference type="NCBI Taxonomy" id="286636"/>
    <lineage>
        <taxon>Bacteria</taxon>
        <taxon>Bacillati</taxon>
        <taxon>Bacillota</taxon>
        <taxon>Bacilli</taxon>
        <taxon>Lactobacillales</taxon>
        <taxon>Streptococcaceae</taxon>
        <taxon>Streptococcus</taxon>
    </lineage>
</organism>
<keyword id="KW-0963">Cytoplasm</keyword>
<keyword id="KW-0227">DNA damage</keyword>
<keyword id="KW-0233">DNA recombination</keyword>
<keyword id="KW-0234">DNA repair</keyword>
<keyword id="KW-0238">DNA-binding</keyword>
<accession>Q5X9H7</accession>
<evidence type="ECO:0000255" key="1">
    <source>
        <dbReference type="HAMAP-Rule" id="MF_00031"/>
    </source>
</evidence>
<dbReference type="EMBL" id="CP000003">
    <property type="protein sequence ID" value="AAT87936.1"/>
    <property type="molecule type" value="Genomic_DNA"/>
</dbReference>
<dbReference type="RefSeq" id="WP_011185063.1">
    <property type="nucleotide sequence ID" value="NC_006086.1"/>
</dbReference>
<dbReference type="SMR" id="Q5X9H7"/>
<dbReference type="KEGG" id="spa:M6_Spy1801"/>
<dbReference type="HOGENOM" id="CLU_087936_1_0_9"/>
<dbReference type="Proteomes" id="UP000001167">
    <property type="component" value="Chromosome"/>
</dbReference>
<dbReference type="GO" id="GO:0005737">
    <property type="term" value="C:cytoplasm"/>
    <property type="evidence" value="ECO:0007669"/>
    <property type="project" value="UniProtKB-SubCell"/>
</dbReference>
<dbReference type="GO" id="GO:0009379">
    <property type="term" value="C:Holliday junction helicase complex"/>
    <property type="evidence" value="ECO:0007669"/>
    <property type="project" value="InterPro"/>
</dbReference>
<dbReference type="GO" id="GO:0048476">
    <property type="term" value="C:Holliday junction resolvase complex"/>
    <property type="evidence" value="ECO:0007669"/>
    <property type="project" value="UniProtKB-UniRule"/>
</dbReference>
<dbReference type="GO" id="GO:0005524">
    <property type="term" value="F:ATP binding"/>
    <property type="evidence" value="ECO:0007669"/>
    <property type="project" value="InterPro"/>
</dbReference>
<dbReference type="GO" id="GO:0000400">
    <property type="term" value="F:four-way junction DNA binding"/>
    <property type="evidence" value="ECO:0007669"/>
    <property type="project" value="UniProtKB-UniRule"/>
</dbReference>
<dbReference type="GO" id="GO:0009378">
    <property type="term" value="F:four-way junction helicase activity"/>
    <property type="evidence" value="ECO:0007669"/>
    <property type="project" value="InterPro"/>
</dbReference>
<dbReference type="GO" id="GO:0006310">
    <property type="term" value="P:DNA recombination"/>
    <property type="evidence" value="ECO:0007669"/>
    <property type="project" value="UniProtKB-UniRule"/>
</dbReference>
<dbReference type="GO" id="GO:0006281">
    <property type="term" value="P:DNA repair"/>
    <property type="evidence" value="ECO:0007669"/>
    <property type="project" value="UniProtKB-UniRule"/>
</dbReference>
<dbReference type="CDD" id="cd14332">
    <property type="entry name" value="UBA_RuvA_C"/>
    <property type="match status" value="1"/>
</dbReference>
<dbReference type="Gene3D" id="1.10.150.20">
    <property type="entry name" value="5' to 3' exonuclease, C-terminal subdomain"/>
    <property type="match status" value="1"/>
</dbReference>
<dbReference type="Gene3D" id="1.10.8.10">
    <property type="entry name" value="DNA helicase RuvA subunit, C-terminal domain"/>
    <property type="match status" value="1"/>
</dbReference>
<dbReference type="Gene3D" id="2.40.50.140">
    <property type="entry name" value="Nucleic acid-binding proteins"/>
    <property type="match status" value="1"/>
</dbReference>
<dbReference type="HAMAP" id="MF_00031">
    <property type="entry name" value="DNA_HJ_migration_RuvA"/>
    <property type="match status" value="1"/>
</dbReference>
<dbReference type="InterPro" id="IPR013849">
    <property type="entry name" value="DNA_helicase_Holl-junc_RuvA_I"/>
</dbReference>
<dbReference type="InterPro" id="IPR003583">
    <property type="entry name" value="Hlx-hairpin-Hlx_DNA-bd_motif"/>
</dbReference>
<dbReference type="InterPro" id="IPR012340">
    <property type="entry name" value="NA-bd_OB-fold"/>
</dbReference>
<dbReference type="InterPro" id="IPR000085">
    <property type="entry name" value="RuvA"/>
</dbReference>
<dbReference type="InterPro" id="IPR010994">
    <property type="entry name" value="RuvA_2-like"/>
</dbReference>
<dbReference type="InterPro" id="IPR011114">
    <property type="entry name" value="RuvA_C"/>
</dbReference>
<dbReference type="InterPro" id="IPR036267">
    <property type="entry name" value="RuvA_C_sf"/>
</dbReference>
<dbReference type="NCBIfam" id="TIGR00084">
    <property type="entry name" value="ruvA"/>
    <property type="match status" value="1"/>
</dbReference>
<dbReference type="Pfam" id="PF14520">
    <property type="entry name" value="HHH_5"/>
    <property type="match status" value="1"/>
</dbReference>
<dbReference type="Pfam" id="PF07499">
    <property type="entry name" value="RuvA_C"/>
    <property type="match status" value="1"/>
</dbReference>
<dbReference type="Pfam" id="PF01330">
    <property type="entry name" value="RuvA_N"/>
    <property type="match status" value="1"/>
</dbReference>
<dbReference type="SMART" id="SM00278">
    <property type="entry name" value="HhH1"/>
    <property type="match status" value="2"/>
</dbReference>
<dbReference type="SUPFAM" id="SSF46929">
    <property type="entry name" value="DNA helicase RuvA subunit, C-terminal domain"/>
    <property type="match status" value="1"/>
</dbReference>
<dbReference type="SUPFAM" id="SSF50249">
    <property type="entry name" value="Nucleic acid-binding proteins"/>
    <property type="match status" value="1"/>
</dbReference>
<dbReference type="SUPFAM" id="SSF47781">
    <property type="entry name" value="RuvA domain 2-like"/>
    <property type="match status" value="1"/>
</dbReference>
<name>RUVA_STRP6</name>
<comment type="function">
    <text evidence="1">The RuvA-RuvB-RuvC complex processes Holliday junction (HJ) DNA during genetic recombination and DNA repair, while the RuvA-RuvB complex plays an important role in the rescue of blocked DNA replication forks via replication fork reversal (RFR). RuvA specifically binds to HJ cruciform DNA, conferring on it an open structure. The RuvB hexamer acts as an ATP-dependent pump, pulling dsDNA into and through the RuvAB complex. HJ branch migration allows RuvC to scan DNA until it finds its consensus sequence, where it cleaves and resolves the cruciform DNA.</text>
</comment>
<comment type="subunit">
    <text evidence="1">Homotetramer. Forms an RuvA(8)-RuvB(12)-Holliday junction (HJ) complex. HJ DNA is sandwiched between 2 RuvA tetramers; dsDNA enters through RuvA and exits via RuvB. An RuvB hexamer assembles on each DNA strand where it exits the tetramer. Each RuvB hexamer is contacted by two RuvA subunits (via domain III) on 2 adjacent RuvB subunits; this complex drives branch migration. In the full resolvosome a probable DNA-RuvA(4)-RuvB(12)-RuvC(2) complex forms which resolves the HJ.</text>
</comment>
<comment type="subcellular location">
    <subcellularLocation>
        <location evidence="1">Cytoplasm</location>
    </subcellularLocation>
</comment>
<comment type="domain">
    <text evidence="1">Has three domains with a flexible linker between the domains II and III and assumes an 'L' shape. Domain III is highly mobile and contacts RuvB.</text>
</comment>
<comment type="similarity">
    <text evidence="1">Belongs to the RuvA family.</text>
</comment>
<gene>
    <name evidence="1" type="primary">ruvA</name>
    <name type="ordered locus">M6_Spy1801</name>
</gene>
<protein>
    <recommendedName>
        <fullName evidence="1">Holliday junction branch migration complex subunit RuvA</fullName>
    </recommendedName>
</protein>
<reference key="1">
    <citation type="journal article" date="2004" name="J. Infect. Dis.">
        <title>Progress toward characterization of the group A Streptococcus metagenome: complete genome sequence of a macrolide-resistant serotype M6 strain.</title>
        <authorList>
            <person name="Banks D.J."/>
            <person name="Porcella S.F."/>
            <person name="Barbian K.D."/>
            <person name="Beres S.B."/>
            <person name="Philips L.E."/>
            <person name="Voyich J.M."/>
            <person name="DeLeo F.R."/>
            <person name="Martin J.M."/>
            <person name="Somerville G.A."/>
            <person name="Musser J.M."/>
        </authorList>
    </citation>
    <scope>NUCLEOTIDE SEQUENCE [LARGE SCALE GENOMIC DNA]</scope>
    <source>
        <strain>ATCC BAA-946 / MGAS10394</strain>
    </source>
</reference>
<feature type="chain" id="PRO_0000094695" description="Holliday junction branch migration complex subunit RuvA">
    <location>
        <begin position="1"/>
        <end position="198"/>
    </location>
</feature>
<feature type="region of interest" description="Domain I" evidence="1">
    <location>
        <begin position="1"/>
        <end position="63"/>
    </location>
</feature>
<feature type="region of interest" description="Domain II" evidence="1">
    <location>
        <begin position="64"/>
        <end position="142"/>
    </location>
</feature>
<feature type="region of interest" description="Flexible linker" evidence="1">
    <location>
        <begin position="143"/>
        <end position="147"/>
    </location>
</feature>
<feature type="region of interest" description="Domain III" evidence="1">
    <location>
        <begin position="148"/>
        <end position="198"/>
    </location>
</feature>
<sequence>MYDYIKGQLTKITAKYIVVEANGLGYMINVANPYSFTDSVNQLVTIYLHQVIREDAHLLFGFHTEDEKDVFLKLISVSGIGPTTALAIVAVDDNEGLVNAIDNSDIKYLMKFPKIGKKTAQQMVLDLAGKFVEAPQETGHTKARSNKAGNTQLDEAIEALLALGYKATELKKIRAFFEGTSETAEQYIKSALKLLMKG</sequence>